<evidence type="ECO:0000255" key="1">
    <source>
        <dbReference type="HAMAP-Rule" id="MF_00022"/>
    </source>
</evidence>
<name>SYE_AERS4</name>
<keyword id="KW-0030">Aminoacyl-tRNA synthetase</keyword>
<keyword id="KW-0067">ATP-binding</keyword>
<keyword id="KW-0963">Cytoplasm</keyword>
<keyword id="KW-0436">Ligase</keyword>
<keyword id="KW-0479">Metal-binding</keyword>
<keyword id="KW-0547">Nucleotide-binding</keyword>
<keyword id="KW-0648">Protein biosynthesis</keyword>
<keyword id="KW-0862">Zinc</keyword>
<dbReference type="EC" id="6.1.1.17" evidence="1"/>
<dbReference type="EMBL" id="CP000644">
    <property type="protein sequence ID" value="ABO89006.1"/>
    <property type="molecule type" value="Genomic_DNA"/>
</dbReference>
<dbReference type="RefSeq" id="WP_005317909.1">
    <property type="nucleotide sequence ID" value="NC_009348.1"/>
</dbReference>
<dbReference type="SMR" id="A4SJD4"/>
<dbReference type="STRING" id="29491.GCA_000820065_02344"/>
<dbReference type="KEGG" id="asa:ASA_0867"/>
<dbReference type="PATRIC" id="fig|382245.13.peg.861"/>
<dbReference type="eggNOG" id="COG0008">
    <property type="taxonomic scope" value="Bacteria"/>
</dbReference>
<dbReference type="HOGENOM" id="CLU_015768_6_3_6"/>
<dbReference type="Proteomes" id="UP000000225">
    <property type="component" value="Chromosome"/>
</dbReference>
<dbReference type="GO" id="GO:0005829">
    <property type="term" value="C:cytosol"/>
    <property type="evidence" value="ECO:0007669"/>
    <property type="project" value="TreeGrafter"/>
</dbReference>
<dbReference type="GO" id="GO:0005524">
    <property type="term" value="F:ATP binding"/>
    <property type="evidence" value="ECO:0007669"/>
    <property type="project" value="UniProtKB-UniRule"/>
</dbReference>
<dbReference type="GO" id="GO:0004818">
    <property type="term" value="F:glutamate-tRNA ligase activity"/>
    <property type="evidence" value="ECO:0007669"/>
    <property type="project" value="UniProtKB-UniRule"/>
</dbReference>
<dbReference type="GO" id="GO:0000049">
    <property type="term" value="F:tRNA binding"/>
    <property type="evidence" value="ECO:0007669"/>
    <property type="project" value="InterPro"/>
</dbReference>
<dbReference type="GO" id="GO:0008270">
    <property type="term" value="F:zinc ion binding"/>
    <property type="evidence" value="ECO:0007669"/>
    <property type="project" value="UniProtKB-UniRule"/>
</dbReference>
<dbReference type="GO" id="GO:0006424">
    <property type="term" value="P:glutamyl-tRNA aminoacylation"/>
    <property type="evidence" value="ECO:0007669"/>
    <property type="project" value="UniProtKB-UniRule"/>
</dbReference>
<dbReference type="CDD" id="cd00808">
    <property type="entry name" value="GluRS_core"/>
    <property type="match status" value="1"/>
</dbReference>
<dbReference type="FunFam" id="3.40.50.620:FF:000007">
    <property type="entry name" value="Glutamate--tRNA ligase"/>
    <property type="match status" value="1"/>
</dbReference>
<dbReference type="Gene3D" id="1.10.10.350">
    <property type="match status" value="1"/>
</dbReference>
<dbReference type="Gene3D" id="3.40.50.620">
    <property type="entry name" value="HUPs"/>
    <property type="match status" value="1"/>
</dbReference>
<dbReference type="HAMAP" id="MF_00022">
    <property type="entry name" value="Glu_tRNA_synth_type1"/>
    <property type="match status" value="1"/>
</dbReference>
<dbReference type="InterPro" id="IPR045462">
    <property type="entry name" value="aa-tRNA-synth_I_cd-bd"/>
</dbReference>
<dbReference type="InterPro" id="IPR020751">
    <property type="entry name" value="aa-tRNA-synth_I_codon-bd_sub2"/>
</dbReference>
<dbReference type="InterPro" id="IPR001412">
    <property type="entry name" value="aa-tRNA-synth_I_CS"/>
</dbReference>
<dbReference type="InterPro" id="IPR008925">
    <property type="entry name" value="aa_tRNA-synth_I_cd-bd_sf"/>
</dbReference>
<dbReference type="InterPro" id="IPR004527">
    <property type="entry name" value="Glu-tRNA-ligase_bac/mito"/>
</dbReference>
<dbReference type="InterPro" id="IPR000924">
    <property type="entry name" value="Glu/Gln-tRNA-synth"/>
</dbReference>
<dbReference type="InterPro" id="IPR020058">
    <property type="entry name" value="Glu/Gln-tRNA-synth_Ib_cat-dom"/>
</dbReference>
<dbReference type="InterPro" id="IPR049940">
    <property type="entry name" value="GluQ/Sye"/>
</dbReference>
<dbReference type="InterPro" id="IPR033910">
    <property type="entry name" value="GluRS_core"/>
</dbReference>
<dbReference type="InterPro" id="IPR014729">
    <property type="entry name" value="Rossmann-like_a/b/a_fold"/>
</dbReference>
<dbReference type="NCBIfam" id="TIGR00464">
    <property type="entry name" value="gltX_bact"/>
    <property type="match status" value="1"/>
</dbReference>
<dbReference type="PANTHER" id="PTHR43311">
    <property type="entry name" value="GLUTAMATE--TRNA LIGASE"/>
    <property type="match status" value="1"/>
</dbReference>
<dbReference type="PANTHER" id="PTHR43311:SF2">
    <property type="entry name" value="GLUTAMATE--TRNA LIGASE, MITOCHONDRIAL-RELATED"/>
    <property type="match status" value="1"/>
</dbReference>
<dbReference type="Pfam" id="PF19269">
    <property type="entry name" value="Anticodon_2"/>
    <property type="match status" value="1"/>
</dbReference>
<dbReference type="Pfam" id="PF00749">
    <property type="entry name" value="tRNA-synt_1c"/>
    <property type="match status" value="1"/>
</dbReference>
<dbReference type="PRINTS" id="PR00987">
    <property type="entry name" value="TRNASYNTHGLU"/>
</dbReference>
<dbReference type="SUPFAM" id="SSF48163">
    <property type="entry name" value="An anticodon-binding domain of class I aminoacyl-tRNA synthetases"/>
    <property type="match status" value="1"/>
</dbReference>
<dbReference type="SUPFAM" id="SSF52374">
    <property type="entry name" value="Nucleotidylyl transferase"/>
    <property type="match status" value="1"/>
</dbReference>
<dbReference type="PROSITE" id="PS00178">
    <property type="entry name" value="AA_TRNA_LIGASE_I"/>
    <property type="match status" value="1"/>
</dbReference>
<comment type="function">
    <text evidence="1">Catalyzes the attachment of glutamate to tRNA(Glu) in a two-step reaction: glutamate is first activated by ATP to form Glu-AMP and then transferred to the acceptor end of tRNA(Glu).</text>
</comment>
<comment type="catalytic activity">
    <reaction evidence="1">
        <text>tRNA(Glu) + L-glutamate + ATP = L-glutamyl-tRNA(Glu) + AMP + diphosphate</text>
        <dbReference type="Rhea" id="RHEA:23540"/>
        <dbReference type="Rhea" id="RHEA-COMP:9663"/>
        <dbReference type="Rhea" id="RHEA-COMP:9680"/>
        <dbReference type="ChEBI" id="CHEBI:29985"/>
        <dbReference type="ChEBI" id="CHEBI:30616"/>
        <dbReference type="ChEBI" id="CHEBI:33019"/>
        <dbReference type="ChEBI" id="CHEBI:78442"/>
        <dbReference type="ChEBI" id="CHEBI:78520"/>
        <dbReference type="ChEBI" id="CHEBI:456215"/>
        <dbReference type="EC" id="6.1.1.17"/>
    </reaction>
</comment>
<comment type="cofactor">
    <cofactor evidence="1">
        <name>Zn(2+)</name>
        <dbReference type="ChEBI" id="CHEBI:29105"/>
    </cofactor>
    <text evidence="1">Binds 1 zinc ion per subunit.</text>
</comment>
<comment type="subunit">
    <text evidence="1">Monomer.</text>
</comment>
<comment type="subcellular location">
    <subcellularLocation>
        <location evidence="1">Cytoplasm</location>
    </subcellularLocation>
</comment>
<comment type="similarity">
    <text evidence="1">Belongs to the class-I aminoacyl-tRNA synthetase family. Glutamate--tRNA ligase type 1 subfamily.</text>
</comment>
<sequence>MKVKTRFAPSPTGFLHVGGARTALYSWLFAKSQGGEFVLRIEDTDLERSTQEAIDAIIEGMEWLELNWDEGPYYQTKRFDRYNGIIDEMLTDGRAYKCYCSRERLDALREGQMASGEKPRYDGKCRDSAHDHPADAPHVIRFRNPTEGSVVFDDHVRGRIEFANTELDDLIIRRTDGAPTYNFCVVVDDWDMEITHVVRGEDHINNTPRQINIYKALNAPVPEFAHVSMILGDDGAKLSKRHGAVSVMQYRDDGYLPEALLNYLVRLGWSHGDQEIFTLDEMIKLFSLDAISKSASAFNTDKLLWLNNHYMRSLDPAYVAKHLAWHMENQKIDTSKGPSLPEVVTLLAERCNTLVEMAAQSRYLFEDFEAIDEAAAKKHLRGVAAEPLALAKAKLTALDTWTTEALHELIEATAAELGQGMGKVGMPLRVAVTGLGQSPGIDAVMALVGKERVLARIDRALAYIEARMAAE</sequence>
<protein>
    <recommendedName>
        <fullName evidence="1">Glutamate--tRNA ligase</fullName>
        <ecNumber evidence="1">6.1.1.17</ecNumber>
    </recommendedName>
    <alternativeName>
        <fullName evidence="1">Glutamyl-tRNA synthetase</fullName>
        <shortName evidence="1">GluRS</shortName>
    </alternativeName>
</protein>
<feature type="chain" id="PRO_1000001868" description="Glutamate--tRNA ligase">
    <location>
        <begin position="1"/>
        <end position="471"/>
    </location>
</feature>
<feature type="short sequence motif" description="'HIGH' region" evidence="1">
    <location>
        <begin position="9"/>
        <end position="19"/>
    </location>
</feature>
<feature type="short sequence motif" description="'KMSKS' region" evidence="1">
    <location>
        <begin position="237"/>
        <end position="241"/>
    </location>
</feature>
<feature type="binding site" evidence="1">
    <location>
        <position position="98"/>
    </location>
    <ligand>
        <name>Zn(2+)</name>
        <dbReference type="ChEBI" id="CHEBI:29105"/>
    </ligand>
</feature>
<feature type="binding site" evidence="1">
    <location>
        <position position="100"/>
    </location>
    <ligand>
        <name>Zn(2+)</name>
        <dbReference type="ChEBI" id="CHEBI:29105"/>
    </ligand>
</feature>
<feature type="binding site" evidence="1">
    <location>
        <position position="125"/>
    </location>
    <ligand>
        <name>Zn(2+)</name>
        <dbReference type="ChEBI" id="CHEBI:29105"/>
    </ligand>
</feature>
<feature type="binding site" evidence="1">
    <location>
        <position position="127"/>
    </location>
    <ligand>
        <name>Zn(2+)</name>
        <dbReference type="ChEBI" id="CHEBI:29105"/>
    </ligand>
</feature>
<feature type="binding site" evidence="1">
    <location>
        <position position="240"/>
    </location>
    <ligand>
        <name>ATP</name>
        <dbReference type="ChEBI" id="CHEBI:30616"/>
    </ligand>
</feature>
<organism>
    <name type="scientific">Aeromonas salmonicida (strain A449)</name>
    <dbReference type="NCBI Taxonomy" id="382245"/>
    <lineage>
        <taxon>Bacteria</taxon>
        <taxon>Pseudomonadati</taxon>
        <taxon>Pseudomonadota</taxon>
        <taxon>Gammaproteobacteria</taxon>
        <taxon>Aeromonadales</taxon>
        <taxon>Aeromonadaceae</taxon>
        <taxon>Aeromonas</taxon>
    </lineage>
</organism>
<accession>A4SJD4</accession>
<gene>
    <name evidence="1" type="primary">gltX</name>
    <name type="ordered locus">ASA_0867</name>
</gene>
<proteinExistence type="inferred from homology"/>
<reference key="1">
    <citation type="journal article" date="2008" name="BMC Genomics">
        <title>The genome of Aeromonas salmonicida subsp. salmonicida A449: insights into the evolution of a fish pathogen.</title>
        <authorList>
            <person name="Reith M.E."/>
            <person name="Singh R.K."/>
            <person name="Curtis B."/>
            <person name="Boyd J.M."/>
            <person name="Bouevitch A."/>
            <person name="Kimball J."/>
            <person name="Munholland J."/>
            <person name="Murphy C."/>
            <person name="Sarty D."/>
            <person name="Williams J."/>
            <person name="Nash J.H."/>
            <person name="Johnson S.C."/>
            <person name="Brown L.L."/>
        </authorList>
    </citation>
    <scope>NUCLEOTIDE SEQUENCE [LARGE SCALE GENOMIC DNA]</scope>
    <source>
        <strain>A449</strain>
    </source>
</reference>